<sequence length="218" mass="24913">MNLLFRLAVFLSLWCCSDAQGQTKEESTEEVKIEVLHRPENCSKTSRKGDLLNAHYDGYLAKDGSKFYCSRTQDEGHPKWFVLGVGHVIKGLDIAMMDMCPGEKRKVIIPPSFAYGKEGYAEGKIPPNATLMFEIELYAVTKGPRSIETFKQIDTDNDRQLSKAEIELYLQKDFEKDANPRDKSYQKAVLEDIFKKNDHNGDGFISPKEYNVHQHDEL</sequence>
<name>FKBP7_MOUSE</name>
<reference key="1">
    <citation type="journal article" date="1998" name="Genomics">
        <title>Molecular cloning, characterization, and chromosomal localization of FKBP23, a novel FK506-binding protein with Ca2+-binding ability.</title>
        <authorList>
            <person name="Nakamura T."/>
            <person name="Yabe D."/>
            <person name="Kanazawa N."/>
            <person name="Tashiro K."/>
            <person name="Sasayama S."/>
            <person name="Honjo T."/>
        </authorList>
    </citation>
    <scope>NUCLEOTIDE SEQUENCE [MRNA]</scope>
    <scope>SUBCELLULAR LOCATION</scope>
    <scope>TISSUE SPECIFICITY</scope>
    <scope>DEVELOPMENTAL STAGE</scope>
    <scope>GLYCOSYLATION</scope>
    <scope>CALCIUM-BINDING</scope>
    <source>
        <strain>NIH Swiss</strain>
        <tissue>Embryonic heart</tissue>
    </source>
</reference>
<reference key="2">
    <citation type="journal article" date="2004" name="Genome Res.">
        <title>The status, quality, and expansion of the NIH full-length cDNA project: the Mammalian Gene Collection (MGC).</title>
        <authorList>
            <consortium name="The MGC Project Team"/>
        </authorList>
    </citation>
    <scope>NUCLEOTIDE SEQUENCE [LARGE SCALE MRNA]</scope>
    <source>
        <strain>C57BL/6J</strain>
        <tissue>Mammary gland</tissue>
    </source>
</reference>
<accession>O54998</accession>
<organism>
    <name type="scientific">Mus musculus</name>
    <name type="common">Mouse</name>
    <dbReference type="NCBI Taxonomy" id="10090"/>
    <lineage>
        <taxon>Eukaryota</taxon>
        <taxon>Metazoa</taxon>
        <taxon>Chordata</taxon>
        <taxon>Craniata</taxon>
        <taxon>Vertebrata</taxon>
        <taxon>Euteleostomi</taxon>
        <taxon>Mammalia</taxon>
        <taxon>Eutheria</taxon>
        <taxon>Euarchontoglires</taxon>
        <taxon>Glires</taxon>
        <taxon>Rodentia</taxon>
        <taxon>Myomorpha</taxon>
        <taxon>Muroidea</taxon>
        <taxon>Muridae</taxon>
        <taxon>Murinae</taxon>
        <taxon>Mus</taxon>
        <taxon>Mus</taxon>
    </lineage>
</organism>
<gene>
    <name type="primary">Fkbp7</name>
    <name type="synonym">Fkbp23</name>
</gene>
<keyword id="KW-0106">Calcium</keyword>
<keyword id="KW-0256">Endoplasmic reticulum</keyword>
<keyword id="KW-0325">Glycoprotein</keyword>
<keyword id="KW-0413">Isomerase</keyword>
<keyword id="KW-0479">Metal-binding</keyword>
<keyword id="KW-1185">Reference proteome</keyword>
<keyword id="KW-0677">Repeat</keyword>
<keyword id="KW-0697">Rotamase</keyword>
<keyword id="KW-0732">Signal</keyword>
<dbReference type="EC" id="5.2.1.8"/>
<dbReference type="EMBL" id="AF040252">
    <property type="protein sequence ID" value="AAC79959.1"/>
    <property type="molecule type" value="mRNA"/>
</dbReference>
<dbReference type="EMBL" id="BC032961">
    <property type="protein sequence ID" value="AAH32961.1"/>
    <property type="molecule type" value="mRNA"/>
</dbReference>
<dbReference type="CCDS" id="CCDS16161.1"/>
<dbReference type="RefSeq" id="NP_034352.1">
    <property type="nucleotide sequence ID" value="NM_010222.2"/>
</dbReference>
<dbReference type="SMR" id="O54998"/>
<dbReference type="BioGRID" id="199688">
    <property type="interactions" value="8"/>
</dbReference>
<dbReference type="FunCoup" id="O54998">
    <property type="interactions" value="459"/>
</dbReference>
<dbReference type="STRING" id="10090.ENSMUSP00000002809"/>
<dbReference type="GlyCosmos" id="O54998">
    <property type="glycosylation" value="2 sites, No reported glycans"/>
</dbReference>
<dbReference type="GlyGen" id="O54998">
    <property type="glycosylation" value="3 sites, 1 N-linked glycan (1 site), 1 O-linked glycan (1 site)"/>
</dbReference>
<dbReference type="PhosphoSitePlus" id="O54998"/>
<dbReference type="jPOST" id="O54998"/>
<dbReference type="PaxDb" id="10090-ENSMUSP00000002809"/>
<dbReference type="PeptideAtlas" id="O54998"/>
<dbReference type="ProteomicsDB" id="271700"/>
<dbReference type="Pumba" id="O54998"/>
<dbReference type="Antibodypedia" id="2249">
    <property type="antibodies" value="167 antibodies from 25 providers"/>
</dbReference>
<dbReference type="DNASU" id="14231"/>
<dbReference type="Ensembl" id="ENSMUST00000002809.14">
    <property type="protein sequence ID" value="ENSMUSP00000002809.8"/>
    <property type="gene ID" value="ENSMUSG00000002732.15"/>
</dbReference>
<dbReference type="GeneID" id="14231"/>
<dbReference type="KEGG" id="mmu:14231"/>
<dbReference type="UCSC" id="uc008kfh.2">
    <property type="organism name" value="mouse"/>
</dbReference>
<dbReference type="AGR" id="MGI:1336879"/>
<dbReference type="CTD" id="51661"/>
<dbReference type="MGI" id="MGI:1336879">
    <property type="gene designation" value="Fkbp7"/>
</dbReference>
<dbReference type="VEuPathDB" id="HostDB:ENSMUSG00000002732"/>
<dbReference type="eggNOG" id="KOG0549">
    <property type="taxonomic scope" value="Eukaryota"/>
</dbReference>
<dbReference type="GeneTree" id="ENSGT00940000159964"/>
<dbReference type="HOGENOM" id="CLU_013615_5_0_1"/>
<dbReference type="InParanoid" id="O54998"/>
<dbReference type="OMA" id="FFYVWGI"/>
<dbReference type="OrthoDB" id="1902587at2759"/>
<dbReference type="PhylomeDB" id="O54998"/>
<dbReference type="TreeFam" id="TF105296"/>
<dbReference type="BioGRID-ORCS" id="14231">
    <property type="hits" value="0 hits in 77 CRISPR screens"/>
</dbReference>
<dbReference type="ChiTaRS" id="Fkbp7">
    <property type="organism name" value="mouse"/>
</dbReference>
<dbReference type="PRO" id="PR:O54998"/>
<dbReference type="Proteomes" id="UP000000589">
    <property type="component" value="Chromosome 2"/>
</dbReference>
<dbReference type="RNAct" id="O54998">
    <property type="molecule type" value="protein"/>
</dbReference>
<dbReference type="Bgee" id="ENSMUSG00000002732">
    <property type="expression patterns" value="Expressed in vault of skull and 256 other cell types or tissues"/>
</dbReference>
<dbReference type="ExpressionAtlas" id="O54998">
    <property type="expression patterns" value="baseline and differential"/>
</dbReference>
<dbReference type="GO" id="GO:0005783">
    <property type="term" value="C:endoplasmic reticulum"/>
    <property type="evidence" value="ECO:0000314"/>
    <property type="project" value="MGI"/>
</dbReference>
<dbReference type="GO" id="GO:0005788">
    <property type="term" value="C:endoplasmic reticulum lumen"/>
    <property type="evidence" value="ECO:0007669"/>
    <property type="project" value="UniProtKB-SubCell"/>
</dbReference>
<dbReference type="GO" id="GO:0005509">
    <property type="term" value="F:calcium ion binding"/>
    <property type="evidence" value="ECO:0000314"/>
    <property type="project" value="MGI"/>
</dbReference>
<dbReference type="GO" id="GO:0003755">
    <property type="term" value="F:peptidyl-prolyl cis-trans isomerase activity"/>
    <property type="evidence" value="ECO:0007669"/>
    <property type="project" value="UniProtKB-KW"/>
</dbReference>
<dbReference type="FunFam" id="3.10.50.40:FF:000006">
    <property type="entry name" value="Peptidyl-prolyl cis-trans isomerase"/>
    <property type="match status" value="1"/>
</dbReference>
<dbReference type="Gene3D" id="3.10.50.40">
    <property type="match status" value="1"/>
</dbReference>
<dbReference type="Gene3D" id="1.10.238.10">
    <property type="entry name" value="EF-hand"/>
    <property type="match status" value="1"/>
</dbReference>
<dbReference type="InterPro" id="IPR011992">
    <property type="entry name" value="EF-hand-dom_pair"/>
</dbReference>
<dbReference type="InterPro" id="IPR018247">
    <property type="entry name" value="EF_Hand_1_Ca_BS"/>
</dbReference>
<dbReference type="InterPro" id="IPR002048">
    <property type="entry name" value="EF_hand_dom"/>
</dbReference>
<dbReference type="InterPro" id="IPR046357">
    <property type="entry name" value="PPIase_dom_sf"/>
</dbReference>
<dbReference type="InterPro" id="IPR052273">
    <property type="entry name" value="PPIase_FKBP"/>
</dbReference>
<dbReference type="InterPro" id="IPR001179">
    <property type="entry name" value="PPIase_FKBP_dom"/>
</dbReference>
<dbReference type="PANTHER" id="PTHR46222:SF2">
    <property type="entry name" value="PEPTIDYL-PROLYL CIS-TRANS ISOMERASE FKBP7"/>
    <property type="match status" value="1"/>
</dbReference>
<dbReference type="PANTHER" id="PTHR46222">
    <property type="entry name" value="PEPTIDYL-PROLYL CIS-TRANS ISOMERASE FKBP7/14"/>
    <property type="match status" value="1"/>
</dbReference>
<dbReference type="Pfam" id="PF13499">
    <property type="entry name" value="EF-hand_7"/>
    <property type="match status" value="1"/>
</dbReference>
<dbReference type="Pfam" id="PF00254">
    <property type="entry name" value="FKBP_C"/>
    <property type="match status" value="1"/>
</dbReference>
<dbReference type="SUPFAM" id="SSF47473">
    <property type="entry name" value="EF-hand"/>
    <property type="match status" value="1"/>
</dbReference>
<dbReference type="SUPFAM" id="SSF54534">
    <property type="entry name" value="FKBP-like"/>
    <property type="match status" value="1"/>
</dbReference>
<dbReference type="PROSITE" id="PS00018">
    <property type="entry name" value="EF_HAND_1"/>
    <property type="match status" value="2"/>
</dbReference>
<dbReference type="PROSITE" id="PS50222">
    <property type="entry name" value="EF_HAND_2"/>
    <property type="match status" value="2"/>
</dbReference>
<dbReference type="PROSITE" id="PS00014">
    <property type="entry name" value="ER_TARGET"/>
    <property type="match status" value="1"/>
</dbReference>
<dbReference type="PROSITE" id="PS50059">
    <property type="entry name" value="FKBP_PPIASE"/>
    <property type="match status" value="1"/>
</dbReference>
<proteinExistence type="evidence at protein level"/>
<comment type="function">
    <text>PPIases accelerate the folding of proteins during protein synthesis.</text>
</comment>
<comment type="catalytic activity">
    <reaction>
        <text>[protein]-peptidylproline (omega=180) = [protein]-peptidylproline (omega=0)</text>
        <dbReference type="Rhea" id="RHEA:16237"/>
        <dbReference type="Rhea" id="RHEA-COMP:10747"/>
        <dbReference type="Rhea" id="RHEA-COMP:10748"/>
        <dbReference type="ChEBI" id="CHEBI:83833"/>
        <dbReference type="ChEBI" id="CHEBI:83834"/>
        <dbReference type="EC" id="5.2.1.8"/>
    </reaction>
</comment>
<comment type="subcellular location">
    <subcellularLocation>
        <location evidence="4 6">Endoplasmic reticulum lumen</location>
    </subcellularLocation>
</comment>
<comment type="tissue specificity">
    <text evidence="6">Expressed at highest levels in heart, lung and testis. Weakly expressed in kidney and lymph node. Little or no expression detected in brain, thymus, spleen and liver.</text>
</comment>
<comment type="developmental stage">
    <text evidence="6">Expression begins at embryonic day 8.5.</text>
</comment>
<comment type="PTM">
    <text evidence="6">Glycosylated.</text>
</comment>
<comment type="miscellaneous">
    <text>Binds calcium.</text>
</comment>
<evidence type="ECO:0000255" key="1"/>
<evidence type="ECO:0000255" key="2">
    <source>
        <dbReference type="PROSITE-ProRule" id="PRU00277"/>
    </source>
</evidence>
<evidence type="ECO:0000255" key="3">
    <source>
        <dbReference type="PROSITE-ProRule" id="PRU00448"/>
    </source>
</evidence>
<evidence type="ECO:0000255" key="4">
    <source>
        <dbReference type="PROSITE-ProRule" id="PRU10138"/>
    </source>
</evidence>
<evidence type="ECO:0000256" key="5">
    <source>
        <dbReference type="SAM" id="MobiDB-lite"/>
    </source>
</evidence>
<evidence type="ECO:0000269" key="6">
    <source>
    </source>
</evidence>
<protein>
    <recommendedName>
        <fullName>Peptidyl-prolyl cis-trans isomerase FKBP7</fullName>
        <shortName>PPIase FKBP7</shortName>
        <ecNumber>5.2.1.8</ecNumber>
    </recommendedName>
    <alternativeName>
        <fullName>23 kDa FK506-binding protein</fullName>
        <shortName>23 kDa FKBP</shortName>
        <shortName>FKBP-23</shortName>
    </alternativeName>
    <alternativeName>
        <fullName>FK506-binding protein 7</fullName>
        <shortName>FKBP-7</shortName>
    </alternativeName>
    <alternativeName>
        <fullName>Rotamase</fullName>
    </alternativeName>
</protein>
<feature type="signal peptide" evidence="1">
    <location>
        <begin position="1"/>
        <end position="19"/>
    </location>
</feature>
<feature type="chain" id="PRO_0000025514" description="Peptidyl-prolyl cis-trans isomerase FKBP7">
    <location>
        <begin position="20"/>
        <end position="218"/>
    </location>
</feature>
<feature type="domain" description="PPIase FKBP-type" evidence="2">
    <location>
        <begin position="49"/>
        <end position="141"/>
    </location>
</feature>
<feature type="domain" description="EF-hand 1" evidence="3">
    <location>
        <begin position="141"/>
        <end position="176"/>
    </location>
</feature>
<feature type="domain" description="EF-hand 2" evidence="3">
    <location>
        <begin position="185"/>
        <end position="218"/>
    </location>
</feature>
<feature type="region of interest" description="Disordered" evidence="5">
    <location>
        <begin position="197"/>
        <end position="218"/>
    </location>
</feature>
<feature type="short sequence motif" description="Prevents secretion from ER" evidence="4">
    <location>
        <begin position="215"/>
        <end position="218"/>
    </location>
</feature>
<feature type="binding site" evidence="3">
    <location>
        <position position="154"/>
    </location>
    <ligand>
        <name>Ca(2+)</name>
        <dbReference type="ChEBI" id="CHEBI:29108"/>
        <label>1</label>
    </ligand>
</feature>
<feature type="binding site" evidence="3">
    <location>
        <position position="156"/>
    </location>
    <ligand>
        <name>Ca(2+)</name>
        <dbReference type="ChEBI" id="CHEBI:29108"/>
        <label>1</label>
    </ligand>
</feature>
<feature type="binding site" evidence="3">
    <location>
        <position position="158"/>
    </location>
    <ligand>
        <name>Ca(2+)</name>
        <dbReference type="ChEBI" id="CHEBI:29108"/>
        <label>1</label>
    </ligand>
</feature>
<feature type="binding site" evidence="3">
    <location>
        <position position="160"/>
    </location>
    <ligand>
        <name>Ca(2+)</name>
        <dbReference type="ChEBI" id="CHEBI:29108"/>
        <label>1</label>
    </ligand>
</feature>
<feature type="binding site" evidence="3">
    <location>
        <position position="165"/>
    </location>
    <ligand>
        <name>Ca(2+)</name>
        <dbReference type="ChEBI" id="CHEBI:29108"/>
        <label>1</label>
    </ligand>
</feature>
<feature type="binding site" evidence="3">
    <location>
        <position position="198"/>
    </location>
    <ligand>
        <name>Ca(2+)</name>
        <dbReference type="ChEBI" id="CHEBI:29108"/>
        <label>2</label>
    </ligand>
</feature>
<feature type="binding site" evidence="3">
    <location>
        <position position="200"/>
    </location>
    <ligand>
        <name>Ca(2+)</name>
        <dbReference type="ChEBI" id="CHEBI:29108"/>
        <label>2</label>
    </ligand>
</feature>
<feature type="binding site" evidence="3">
    <location>
        <position position="202"/>
    </location>
    <ligand>
        <name>Ca(2+)</name>
        <dbReference type="ChEBI" id="CHEBI:29108"/>
        <label>2</label>
    </ligand>
</feature>
<feature type="binding site" evidence="3">
    <location>
        <position position="209"/>
    </location>
    <ligand>
        <name>Ca(2+)</name>
        <dbReference type="ChEBI" id="CHEBI:29108"/>
        <label>2</label>
    </ligand>
</feature>
<feature type="glycosylation site" description="N-linked (GlcNAc...) asparagine" evidence="1">
    <location>
        <position position="41"/>
    </location>
</feature>
<feature type="glycosylation site" description="N-linked (GlcNAc...) asparagine" evidence="1">
    <location>
        <position position="128"/>
    </location>
</feature>